<accession>E7F9T0</accession>
<accession>F1R7H4</accession>
<dbReference type="EC" id="1.14.13.225" evidence="2"/>
<dbReference type="EC" id="1.6.3.1" evidence="2"/>
<dbReference type="EMBL" id="BX548066">
    <property type="status" value="NOT_ANNOTATED_CDS"/>
    <property type="molecule type" value="Genomic_DNA"/>
</dbReference>
<dbReference type="RefSeq" id="NP_001303659.1">
    <property type="nucleotide sequence ID" value="NM_001316730.1"/>
</dbReference>
<dbReference type="RefSeq" id="XP_003201274.1">
    <property type="nucleotide sequence ID" value="XM_003201226.6"/>
</dbReference>
<dbReference type="RefSeq" id="XP_009295352.1">
    <property type="nucleotide sequence ID" value="XM_009297077.2"/>
</dbReference>
<dbReference type="SMR" id="E7F9T0"/>
<dbReference type="STRING" id="7955.ENSDARP00000121526"/>
<dbReference type="PaxDb" id="7955-ENSDARP00000121526"/>
<dbReference type="PeptideAtlas" id="E7F9T0"/>
<dbReference type="Ensembl" id="ENSDART00000184761">
    <property type="protein sequence ID" value="ENSDARP00000155850"/>
    <property type="gene ID" value="ENSDARG00000011809"/>
</dbReference>
<dbReference type="Ensembl" id="ENSDART00000187222">
    <property type="protein sequence ID" value="ENSDARP00000154178"/>
    <property type="gene ID" value="ENSDARG00000011809"/>
</dbReference>
<dbReference type="GeneID" id="568573"/>
<dbReference type="KEGG" id="dre:568573"/>
<dbReference type="AGR" id="ZFIN:ZDB-GENE-081022-3"/>
<dbReference type="CTD" id="64780"/>
<dbReference type="ZFIN" id="ZDB-GENE-081022-3">
    <property type="gene designation" value="mical1"/>
</dbReference>
<dbReference type="eggNOG" id="KOG1700">
    <property type="taxonomic scope" value="Eukaryota"/>
</dbReference>
<dbReference type="InParanoid" id="E7F9T0"/>
<dbReference type="OrthoDB" id="20799at2759"/>
<dbReference type="PhylomeDB" id="E7F9T0"/>
<dbReference type="PRO" id="PR:E7F9T0"/>
<dbReference type="Proteomes" id="UP000000437">
    <property type="component" value="Chromosome 23"/>
</dbReference>
<dbReference type="Bgee" id="ENSDARG00000011809">
    <property type="expression patterns" value="Expressed in granulocyte and 19 other cell types or tissues"/>
</dbReference>
<dbReference type="ExpressionAtlas" id="E7F9T0">
    <property type="expression patterns" value="baseline and differential"/>
</dbReference>
<dbReference type="GO" id="GO:0005737">
    <property type="term" value="C:cytoplasm"/>
    <property type="evidence" value="ECO:0000250"/>
    <property type="project" value="UniProtKB"/>
</dbReference>
<dbReference type="GO" id="GO:0005856">
    <property type="term" value="C:cytoskeleton"/>
    <property type="evidence" value="ECO:0007669"/>
    <property type="project" value="UniProtKB-SubCell"/>
</dbReference>
<dbReference type="GO" id="GO:0005829">
    <property type="term" value="C:cytosol"/>
    <property type="evidence" value="ECO:0000250"/>
    <property type="project" value="UniProtKB"/>
</dbReference>
<dbReference type="GO" id="GO:0010008">
    <property type="term" value="C:endosome membrane"/>
    <property type="evidence" value="ECO:0000250"/>
    <property type="project" value="UniProtKB"/>
</dbReference>
<dbReference type="GO" id="GO:0030496">
    <property type="term" value="C:midbody"/>
    <property type="evidence" value="ECO:0007669"/>
    <property type="project" value="UniProtKB-SubCell"/>
</dbReference>
<dbReference type="GO" id="GO:0003779">
    <property type="term" value="F:actin binding"/>
    <property type="evidence" value="ECO:0000250"/>
    <property type="project" value="UniProtKB"/>
</dbReference>
<dbReference type="GO" id="GO:0120501">
    <property type="term" value="F:F-actin monooxygenase activity"/>
    <property type="evidence" value="ECO:0007669"/>
    <property type="project" value="UniProtKB-EC"/>
</dbReference>
<dbReference type="GO" id="GO:0071949">
    <property type="term" value="F:FAD binding"/>
    <property type="evidence" value="ECO:0000250"/>
    <property type="project" value="UniProtKB"/>
</dbReference>
<dbReference type="GO" id="GO:0046872">
    <property type="term" value="F:metal ion binding"/>
    <property type="evidence" value="ECO:0007669"/>
    <property type="project" value="UniProtKB-KW"/>
</dbReference>
<dbReference type="GO" id="GO:0106294">
    <property type="term" value="F:NADPH oxidase H202-forming activity"/>
    <property type="evidence" value="ECO:0007669"/>
    <property type="project" value="RHEA"/>
</dbReference>
<dbReference type="GO" id="GO:0016709">
    <property type="term" value="F:oxidoreductase activity, acting on paired donors, with incorporation or reduction of molecular oxygen, NAD(P)H as one donor, and incorporation of one atom of oxygen"/>
    <property type="evidence" value="ECO:0000250"/>
    <property type="project" value="UniProtKB"/>
</dbReference>
<dbReference type="GO" id="GO:0030042">
    <property type="term" value="P:actin filament depolymerization"/>
    <property type="evidence" value="ECO:0000250"/>
    <property type="project" value="UniProtKB"/>
</dbReference>
<dbReference type="GO" id="GO:0019417">
    <property type="term" value="P:sulfur oxidation"/>
    <property type="evidence" value="ECO:0000250"/>
    <property type="project" value="UniProtKB"/>
</dbReference>
<dbReference type="CDD" id="cd22198">
    <property type="entry name" value="CH_MICAL_EHBP-like"/>
    <property type="match status" value="1"/>
</dbReference>
<dbReference type="CDD" id="cd09439">
    <property type="entry name" value="LIM_Mical"/>
    <property type="match status" value="1"/>
</dbReference>
<dbReference type="FunFam" id="3.50.50.60:FF:000004">
    <property type="entry name" value="protein-methionine sulfoxide oxidase MICAL2 isoform X1"/>
    <property type="match status" value="1"/>
</dbReference>
<dbReference type="Gene3D" id="1.10.418.10">
    <property type="entry name" value="Calponin-like domain"/>
    <property type="match status" value="1"/>
</dbReference>
<dbReference type="Gene3D" id="2.10.110.10">
    <property type="entry name" value="Cysteine Rich Protein"/>
    <property type="match status" value="1"/>
</dbReference>
<dbReference type="Gene3D" id="3.50.50.60">
    <property type="entry name" value="FAD/NAD(P)-binding domain"/>
    <property type="match status" value="1"/>
</dbReference>
<dbReference type="InterPro" id="IPR022735">
    <property type="entry name" value="bMERB_dom"/>
</dbReference>
<dbReference type="InterPro" id="IPR001715">
    <property type="entry name" value="CH_dom"/>
</dbReference>
<dbReference type="InterPro" id="IPR036872">
    <property type="entry name" value="CH_dom_sf"/>
</dbReference>
<dbReference type="InterPro" id="IPR050540">
    <property type="entry name" value="F-actin_Monoox_Mical"/>
</dbReference>
<dbReference type="InterPro" id="IPR002938">
    <property type="entry name" value="FAD-bd"/>
</dbReference>
<dbReference type="InterPro" id="IPR036188">
    <property type="entry name" value="FAD/NAD-bd_sf"/>
</dbReference>
<dbReference type="InterPro" id="IPR001781">
    <property type="entry name" value="Znf_LIM"/>
</dbReference>
<dbReference type="PANTHER" id="PTHR23167:SF35">
    <property type="entry name" value="[F-ACTIN]-MONOOXYGENASE MICAL1"/>
    <property type="match status" value="1"/>
</dbReference>
<dbReference type="PANTHER" id="PTHR23167">
    <property type="entry name" value="CALPONIN HOMOLOGY DOMAIN-CONTAINING PROTEIN DDB_G0272472-RELATED"/>
    <property type="match status" value="1"/>
</dbReference>
<dbReference type="Pfam" id="PF12130">
    <property type="entry name" value="bMERB_dom"/>
    <property type="match status" value="1"/>
</dbReference>
<dbReference type="Pfam" id="PF00307">
    <property type="entry name" value="CH"/>
    <property type="match status" value="1"/>
</dbReference>
<dbReference type="Pfam" id="PF01494">
    <property type="entry name" value="FAD_binding_3"/>
    <property type="match status" value="1"/>
</dbReference>
<dbReference type="Pfam" id="PF00412">
    <property type="entry name" value="LIM"/>
    <property type="match status" value="1"/>
</dbReference>
<dbReference type="Pfam" id="PF25413">
    <property type="entry name" value="Rossman_Mical"/>
    <property type="match status" value="1"/>
</dbReference>
<dbReference type="SMART" id="SM00033">
    <property type="entry name" value="CH"/>
    <property type="match status" value="1"/>
</dbReference>
<dbReference type="SMART" id="SM01203">
    <property type="entry name" value="DUF3585"/>
    <property type="match status" value="1"/>
</dbReference>
<dbReference type="SMART" id="SM00132">
    <property type="entry name" value="LIM"/>
    <property type="match status" value="1"/>
</dbReference>
<dbReference type="SUPFAM" id="SSF47576">
    <property type="entry name" value="Calponin-homology domain, CH-domain"/>
    <property type="match status" value="1"/>
</dbReference>
<dbReference type="SUPFAM" id="SSF51905">
    <property type="entry name" value="FAD/NAD(P)-binding domain"/>
    <property type="match status" value="1"/>
</dbReference>
<dbReference type="SUPFAM" id="SSF57716">
    <property type="entry name" value="Glucocorticoid receptor-like (DNA-binding domain)"/>
    <property type="match status" value="2"/>
</dbReference>
<dbReference type="PROSITE" id="PS51848">
    <property type="entry name" value="BMERB"/>
    <property type="match status" value="1"/>
</dbReference>
<dbReference type="PROSITE" id="PS50021">
    <property type="entry name" value="CH"/>
    <property type="match status" value="1"/>
</dbReference>
<dbReference type="PROSITE" id="PS00478">
    <property type="entry name" value="LIM_DOMAIN_1"/>
    <property type="match status" value="1"/>
</dbReference>
<dbReference type="PROSITE" id="PS50023">
    <property type="entry name" value="LIM_DOMAIN_2"/>
    <property type="match status" value="1"/>
</dbReference>
<reference key="1">
    <citation type="journal article" date="2013" name="Nature">
        <title>The zebrafish reference genome sequence and its relationship to the human genome.</title>
        <authorList>
            <person name="Howe K."/>
            <person name="Clark M.D."/>
            <person name="Torroja C.F."/>
            <person name="Torrance J."/>
            <person name="Berthelot C."/>
            <person name="Muffato M."/>
            <person name="Collins J.E."/>
            <person name="Humphray S."/>
            <person name="McLaren K."/>
            <person name="Matthews L."/>
            <person name="McLaren S."/>
            <person name="Sealy I."/>
            <person name="Caccamo M."/>
            <person name="Churcher C."/>
            <person name="Scott C."/>
            <person name="Barrett J.C."/>
            <person name="Koch R."/>
            <person name="Rauch G.J."/>
            <person name="White S."/>
            <person name="Chow W."/>
            <person name="Kilian B."/>
            <person name="Quintais L.T."/>
            <person name="Guerra-Assuncao J.A."/>
            <person name="Zhou Y."/>
            <person name="Gu Y."/>
            <person name="Yen J."/>
            <person name="Vogel J.H."/>
            <person name="Eyre T."/>
            <person name="Redmond S."/>
            <person name="Banerjee R."/>
            <person name="Chi J."/>
            <person name="Fu B."/>
            <person name="Langley E."/>
            <person name="Maguire S.F."/>
            <person name="Laird G.K."/>
            <person name="Lloyd D."/>
            <person name="Kenyon E."/>
            <person name="Donaldson S."/>
            <person name="Sehra H."/>
            <person name="Almeida-King J."/>
            <person name="Loveland J."/>
            <person name="Trevanion S."/>
            <person name="Jones M."/>
            <person name="Quail M."/>
            <person name="Willey D."/>
            <person name="Hunt A."/>
            <person name="Burton J."/>
            <person name="Sims S."/>
            <person name="McLay K."/>
            <person name="Plumb B."/>
            <person name="Davis J."/>
            <person name="Clee C."/>
            <person name="Oliver K."/>
            <person name="Clark R."/>
            <person name="Riddle C."/>
            <person name="Elliot D."/>
            <person name="Threadgold G."/>
            <person name="Harden G."/>
            <person name="Ware D."/>
            <person name="Begum S."/>
            <person name="Mortimore B."/>
            <person name="Kerry G."/>
            <person name="Heath P."/>
            <person name="Phillimore B."/>
            <person name="Tracey A."/>
            <person name="Corby N."/>
            <person name="Dunn M."/>
            <person name="Johnson C."/>
            <person name="Wood J."/>
            <person name="Clark S."/>
            <person name="Pelan S."/>
            <person name="Griffiths G."/>
            <person name="Smith M."/>
            <person name="Glithero R."/>
            <person name="Howden P."/>
            <person name="Barker N."/>
            <person name="Lloyd C."/>
            <person name="Stevens C."/>
            <person name="Harley J."/>
            <person name="Holt K."/>
            <person name="Panagiotidis G."/>
            <person name="Lovell J."/>
            <person name="Beasley H."/>
            <person name="Henderson C."/>
            <person name="Gordon D."/>
            <person name="Auger K."/>
            <person name="Wright D."/>
            <person name="Collins J."/>
            <person name="Raisen C."/>
            <person name="Dyer L."/>
            <person name="Leung K."/>
            <person name="Robertson L."/>
            <person name="Ambridge K."/>
            <person name="Leongamornlert D."/>
            <person name="McGuire S."/>
            <person name="Gilderthorp R."/>
            <person name="Griffiths C."/>
            <person name="Manthravadi D."/>
            <person name="Nichol S."/>
            <person name="Barker G."/>
            <person name="Whitehead S."/>
            <person name="Kay M."/>
            <person name="Brown J."/>
            <person name="Murnane C."/>
            <person name="Gray E."/>
            <person name="Humphries M."/>
            <person name="Sycamore N."/>
            <person name="Barker D."/>
            <person name="Saunders D."/>
            <person name="Wallis J."/>
            <person name="Babbage A."/>
            <person name="Hammond S."/>
            <person name="Mashreghi-Mohammadi M."/>
            <person name="Barr L."/>
            <person name="Martin S."/>
            <person name="Wray P."/>
            <person name="Ellington A."/>
            <person name="Matthews N."/>
            <person name="Ellwood M."/>
            <person name="Woodmansey R."/>
            <person name="Clark G."/>
            <person name="Cooper J."/>
            <person name="Tromans A."/>
            <person name="Grafham D."/>
            <person name="Skuce C."/>
            <person name="Pandian R."/>
            <person name="Andrews R."/>
            <person name="Harrison E."/>
            <person name="Kimberley A."/>
            <person name="Garnett J."/>
            <person name="Fosker N."/>
            <person name="Hall R."/>
            <person name="Garner P."/>
            <person name="Kelly D."/>
            <person name="Bird C."/>
            <person name="Palmer S."/>
            <person name="Gehring I."/>
            <person name="Berger A."/>
            <person name="Dooley C.M."/>
            <person name="Ersan-Urun Z."/>
            <person name="Eser C."/>
            <person name="Geiger H."/>
            <person name="Geisler M."/>
            <person name="Karotki L."/>
            <person name="Kirn A."/>
            <person name="Konantz J."/>
            <person name="Konantz M."/>
            <person name="Oberlander M."/>
            <person name="Rudolph-Geiger S."/>
            <person name="Teucke M."/>
            <person name="Lanz C."/>
            <person name="Raddatz G."/>
            <person name="Osoegawa K."/>
            <person name="Zhu B."/>
            <person name="Rapp A."/>
            <person name="Widaa S."/>
            <person name="Langford C."/>
            <person name="Yang F."/>
            <person name="Schuster S.C."/>
            <person name="Carter N.P."/>
            <person name="Harrow J."/>
            <person name="Ning Z."/>
            <person name="Herrero J."/>
            <person name="Searle S.M."/>
            <person name="Enright A."/>
            <person name="Geisler R."/>
            <person name="Plasterk R.H."/>
            <person name="Lee C."/>
            <person name="Westerfield M."/>
            <person name="de Jong P.J."/>
            <person name="Zon L.I."/>
            <person name="Postlethwait J.H."/>
            <person name="Nusslein-Volhard C."/>
            <person name="Hubbard T.J."/>
            <person name="Roest Crollius H."/>
            <person name="Rogers J."/>
            <person name="Stemple D.L."/>
        </authorList>
    </citation>
    <scope>NUCLEOTIDE SEQUENCE [LARGE SCALE GENOMIC DNA]</scope>
    <source>
        <strain>Tuebingen</strain>
    </source>
</reference>
<proteinExistence type="inferred from homology"/>
<evidence type="ECO:0000250" key="1"/>
<evidence type="ECO:0000250" key="2">
    <source>
        <dbReference type="UniProtKB" id="Q8TDZ2"/>
    </source>
</evidence>
<evidence type="ECO:0000250" key="3">
    <source>
        <dbReference type="UniProtKB" id="Q8VDP3"/>
    </source>
</evidence>
<evidence type="ECO:0000255" key="4"/>
<evidence type="ECO:0000255" key="5">
    <source>
        <dbReference type="PROSITE-ProRule" id="PRU00044"/>
    </source>
</evidence>
<evidence type="ECO:0000255" key="6">
    <source>
        <dbReference type="PROSITE-ProRule" id="PRU00125"/>
    </source>
</evidence>
<evidence type="ECO:0000255" key="7">
    <source>
        <dbReference type="PROSITE-ProRule" id="PRU01195"/>
    </source>
</evidence>
<evidence type="ECO:0000256" key="8">
    <source>
        <dbReference type="SAM" id="MobiDB-lite"/>
    </source>
</evidence>
<evidence type="ECO:0000305" key="9"/>
<protein>
    <recommendedName>
        <fullName>[F-actin]-monooxygenase mical1</fullName>
        <ecNumber evidence="2">1.14.13.225</ecNumber>
        <ecNumber evidence="2">1.6.3.1</ecNumber>
    </recommendedName>
    <alternativeName>
        <fullName>Molecule interacting with CasL protein 1</fullName>
        <shortName>MICAL-1</shortName>
    </alternativeName>
</protein>
<organism>
    <name type="scientific">Danio rerio</name>
    <name type="common">Zebrafish</name>
    <name type="synonym">Brachydanio rerio</name>
    <dbReference type="NCBI Taxonomy" id="7955"/>
    <lineage>
        <taxon>Eukaryota</taxon>
        <taxon>Metazoa</taxon>
        <taxon>Chordata</taxon>
        <taxon>Craniata</taxon>
        <taxon>Vertebrata</taxon>
        <taxon>Euteleostomi</taxon>
        <taxon>Actinopterygii</taxon>
        <taxon>Neopterygii</taxon>
        <taxon>Teleostei</taxon>
        <taxon>Ostariophysi</taxon>
        <taxon>Cypriniformes</taxon>
        <taxon>Danionidae</taxon>
        <taxon>Danioninae</taxon>
        <taxon>Danio</taxon>
    </lineage>
</organism>
<gene>
    <name type="primary">mical1</name>
</gene>
<keyword id="KW-0009">Actin-binding</keyword>
<keyword id="KW-0175">Coiled coil</keyword>
<keyword id="KW-0963">Cytoplasm</keyword>
<keyword id="KW-0206">Cytoskeleton</keyword>
<keyword id="KW-0967">Endosome</keyword>
<keyword id="KW-0274">FAD</keyword>
<keyword id="KW-0285">Flavoprotein</keyword>
<keyword id="KW-0440">LIM domain</keyword>
<keyword id="KW-0472">Membrane</keyword>
<keyword id="KW-0479">Metal-binding</keyword>
<keyword id="KW-0503">Monooxygenase</keyword>
<keyword id="KW-0521">NADP</keyword>
<keyword id="KW-0560">Oxidoreductase</keyword>
<keyword id="KW-1185">Reference proteome</keyword>
<keyword id="KW-0862">Zinc</keyword>
<name>MICA1_DANRE</name>
<comment type="function">
    <text evidence="2 3">Monooxygenase that promotes depolymerization of F-actin by mediating oxidation of specific methionine residues on actin to form methionine-sulfoxide, resulting in actin filament disassembly and prevent repolymerization. May be involved in endosomal tubule extension and neosynthesized protein export (By similarity).</text>
</comment>
<comment type="catalytic activity">
    <reaction evidence="2">
        <text>L-methionyl-[F-actin] + NADPH + O2 + H(+) = L-methionyl-(R)-S-oxide-[F-actin] + NADP(+) + H2O</text>
        <dbReference type="Rhea" id="RHEA:51308"/>
        <dbReference type="Rhea" id="RHEA-COMP:12953"/>
        <dbReference type="Rhea" id="RHEA-COMP:12956"/>
        <dbReference type="ChEBI" id="CHEBI:15377"/>
        <dbReference type="ChEBI" id="CHEBI:15378"/>
        <dbReference type="ChEBI" id="CHEBI:15379"/>
        <dbReference type="ChEBI" id="CHEBI:16044"/>
        <dbReference type="ChEBI" id="CHEBI:45764"/>
        <dbReference type="ChEBI" id="CHEBI:57783"/>
        <dbReference type="ChEBI" id="CHEBI:58349"/>
        <dbReference type="EC" id="1.14.13.225"/>
    </reaction>
</comment>
<comment type="catalytic activity">
    <reaction evidence="2">
        <text>NADPH + O2 + H(+) = H2O2 + NADP(+)</text>
        <dbReference type="Rhea" id="RHEA:11260"/>
        <dbReference type="ChEBI" id="CHEBI:15378"/>
        <dbReference type="ChEBI" id="CHEBI:15379"/>
        <dbReference type="ChEBI" id="CHEBI:16240"/>
        <dbReference type="ChEBI" id="CHEBI:57783"/>
        <dbReference type="ChEBI" id="CHEBI:58349"/>
        <dbReference type="EC" id="1.6.3.1"/>
    </reaction>
</comment>
<comment type="cofactor">
    <cofactor evidence="2">
        <name>FAD</name>
        <dbReference type="ChEBI" id="CHEBI:57692"/>
    </cofactor>
</comment>
<comment type="subcellular location">
    <subcellularLocation>
        <location evidence="1">Cytoplasm</location>
    </subcellularLocation>
    <subcellularLocation>
        <location evidence="1">Cytoplasm</location>
        <location evidence="1">Cytoskeleton</location>
    </subcellularLocation>
    <subcellularLocation>
        <location evidence="2">Midbody</location>
    </subcellularLocation>
    <subcellularLocation>
        <location evidence="2">Endosome membrane</location>
    </subcellularLocation>
</comment>
<comment type="similarity">
    <text evidence="9">Belongs to the Mical family.</text>
</comment>
<sequence>MVNPLDSVNPSHALFEGFVQAQTCKETQQNFTELCRHLQVDPKDYKHFYSKLKDRLNYWKAKDLWQKIDKRAAHPDYDQGKACHQNKCLVLGAGPCGLRTAIELALLGAQVVVLEKRSSFTRNNVLHLWPFTIKDLLNLGAKKFYGRFCSGSIHHISIRQLQLILLKVALFLGVEVHTGVAFEGLNEPSGSAGWRANVSPKSHPVADFQFDVFISAGGGKYVPDGFKIKELRGKLAIGITANFVNRHTKQEAQVQEISGVARIYNQQFFQALQSEIGVDLENIVYYKDDTHYFVMTAKKASLLKKGVIKQDFSDADKLLAPSNVNQEALQDYAFEACDFSTEHLLPNLEFAKNHKGQADVAMFDFTCMQRAESASLVKERNGKRLLIGLVGDSLVEPFWPLGTGIARGFLGAFDAAWMVRSWGKGVQPMEVLAERESVYQLLSQTTPENTSKNYMAYSIDPSTRYPNINLSSIKPRQVKRLYEAEEQESKPNKLKKPDIKAKPRKDSMKRLEELLSWCQKNTVGYEHVKVKDLSESWRSGLALCALIHSFRPELVDMSALDEYNIIKNNKLAFDLMEKEFGITPIMRPGDMMTCGKIDQLSMVVYLTQIRNALTEKDTPAAQSNTLSLSRKRSAVAFLNTLKRNSLQRHKDRLASVKGPRQQNMKEKEEKKDVKEESLSSETSACEPCYFCKKHLYVVERESAEGKFFHRSCFNCFQCGSTLRQGGYSFHSDNGRFYCELHSLAEEEEGDEGHGGAQNHTENGSKEDKNGETTAASSPPAHLSIKRKGSYKISVDPDFDESTEFPAPDQDEPPDLEESHQPPKPSELSAENTNMENQQHNINPVPAPRGSRAPLPKPRTVHNVVHEPCNIPEEAEQIPEEPKPKPSLRKLQQSEEEKVDLLSQDSDSETRGSSSAASTSSSSKQHEEEGYWSGGTTWGKSHREQRNRPCIRRKSEPPLPLTGHSQHGKMRSKFSPWNLSSPRLQQRFSVHRVPAGQSQPDQYVSEDDNEDDEDEDEEDLQAEHYLDCEGADFEFSDSEKRNLKRMKTLERKAKMTEIQRFHKAQSIQRRLEEIEVTFKELEEKGVELERALRGETGTGDPEIIDQWIELVQEKNNLLSEESDLMVASRQLELEDKQSMLEMELRRYMEMDDSEKSPEQQKHEAEILQEMLDVVDMRDSLVAFLEEKRLKEVNDQFNSSLDAKRRSTTASQVHWE</sequence>
<feature type="chain" id="PRO_0000416300" description="[F-actin]-monooxygenase mical1">
    <location>
        <begin position="1"/>
        <end position="1214"/>
    </location>
</feature>
<feature type="domain" description="Calponin-homology (CH)" evidence="5">
    <location>
        <begin position="508"/>
        <end position="614"/>
    </location>
</feature>
<feature type="domain" description="LIM zinc-binding" evidence="6">
    <location>
        <begin position="686"/>
        <end position="748"/>
    </location>
</feature>
<feature type="domain" description="bMERB" evidence="7">
    <location>
        <begin position="1053"/>
        <end position="1199"/>
    </location>
</feature>
<feature type="region of interest" description="Monooxygenase domain" evidence="3">
    <location>
        <begin position="1"/>
        <end position="488"/>
    </location>
</feature>
<feature type="region of interest" description="Disordered" evidence="8">
    <location>
        <begin position="484"/>
        <end position="505"/>
    </location>
</feature>
<feature type="region of interest" description="Disordered" evidence="8">
    <location>
        <begin position="649"/>
        <end position="676"/>
    </location>
</feature>
<feature type="region of interest" description="Disordered" evidence="8">
    <location>
        <begin position="747"/>
        <end position="1019"/>
    </location>
</feature>
<feature type="region of interest" description="Disordered" evidence="8">
    <location>
        <begin position="1194"/>
        <end position="1214"/>
    </location>
</feature>
<feature type="coiled-coil region" evidence="4">
    <location>
        <begin position="1061"/>
        <end position="1131"/>
    </location>
</feature>
<feature type="compositionally biased region" description="Basic and acidic residues" evidence="8">
    <location>
        <begin position="663"/>
        <end position="676"/>
    </location>
</feature>
<feature type="compositionally biased region" description="Acidic residues" evidence="8">
    <location>
        <begin position="796"/>
        <end position="815"/>
    </location>
</feature>
<feature type="compositionally biased region" description="Polar residues" evidence="8">
    <location>
        <begin position="828"/>
        <end position="841"/>
    </location>
</feature>
<feature type="compositionally biased region" description="Low complexity" evidence="8">
    <location>
        <begin position="910"/>
        <end position="922"/>
    </location>
</feature>
<feature type="compositionally biased region" description="Polar residues" evidence="8">
    <location>
        <begin position="974"/>
        <end position="987"/>
    </location>
</feature>
<feature type="compositionally biased region" description="Acidic residues" evidence="8">
    <location>
        <begin position="1003"/>
        <end position="1019"/>
    </location>
</feature>
<feature type="binding site" evidence="3">
    <location>
        <position position="96"/>
    </location>
    <ligand>
        <name>FAD</name>
        <dbReference type="ChEBI" id="CHEBI:57692"/>
    </ligand>
</feature>
<feature type="binding site" evidence="3">
    <location>
        <begin position="115"/>
        <end position="117"/>
    </location>
    <ligand>
        <name>FAD</name>
        <dbReference type="ChEBI" id="CHEBI:57692"/>
    </ligand>
</feature>
<feature type="binding site" evidence="3">
    <location>
        <begin position="122"/>
        <end position="124"/>
    </location>
    <ligand>
        <name>FAD</name>
        <dbReference type="ChEBI" id="CHEBI:57692"/>
    </ligand>
</feature>
<feature type="binding site" evidence="3">
    <location>
        <position position="182"/>
    </location>
    <ligand>
        <name>FAD</name>
        <dbReference type="ChEBI" id="CHEBI:57692"/>
    </ligand>
</feature>
<feature type="binding site" evidence="3">
    <location>
        <position position="292"/>
    </location>
    <ligand>
        <name>FAD</name>
        <dbReference type="ChEBI" id="CHEBI:57692"/>
    </ligand>
</feature>
<feature type="binding site" evidence="3">
    <location>
        <position position="392"/>
    </location>
    <ligand>
        <name>FAD</name>
        <dbReference type="ChEBI" id="CHEBI:57692"/>
    </ligand>
</feature>
<feature type="binding site" evidence="2">
    <location>
        <position position="688"/>
    </location>
    <ligand>
        <name>Zn(2+)</name>
        <dbReference type="ChEBI" id="CHEBI:29105"/>
        <label>1</label>
    </ligand>
</feature>
<feature type="binding site" evidence="2">
    <location>
        <position position="691"/>
    </location>
    <ligand>
        <name>Zn(2+)</name>
        <dbReference type="ChEBI" id="CHEBI:29105"/>
        <label>1</label>
    </ligand>
</feature>
<feature type="binding site" evidence="2">
    <location>
        <position position="709"/>
    </location>
    <ligand>
        <name>Zn(2+)</name>
        <dbReference type="ChEBI" id="CHEBI:29105"/>
        <label>1</label>
    </ligand>
</feature>
<feature type="binding site" evidence="2">
    <location>
        <position position="712"/>
    </location>
    <ligand>
        <name>Zn(2+)</name>
        <dbReference type="ChEBI" id="CHEBI:29105"/>
        <label>1</label>
    </ligand>
</feature>
<feature type="binding site" evidence="2">
    <location>
        <position position="715"/>
    </location>
    <ligand>
        <name>Zn(2+)</name>
        <dbReference type="ChEBI" id="CHEBI:29105"/>
        <label>2</label>
    </ligand>
</feature>
<feature type="binding site" evidence="2">
    <location>
        <position position="718"/>
    </location>
    <ligand>
        <name>Zn(2+)</name>
        <dbReference type="ChEBI" id="CHEBI:29105"/>
        <label>2</label>
    </ligand>
</feature>
<feature type="binding site" evidence="2">
    <location>
        <position position="738"/>
    </location>
    <ligand>
        <name>Zn(2+)</name>
        <dbReference type="ChEBI" id="CHEBI:29105"/>
        <label>2</label>
    </ligand>
</feature>
<feature type="binding site" evidence="2">
    <location>
        <position position="741"/>
    </location>
    <ligand>
        <name>Zn(2+)</name>
        <dbReference type="ChEBI" id="CHEBI:29105"/>
        <label>2</label>
    </ligand>
</feature>